<evidence type="ECO:0000255" key="1"/>
<evidence type="ECO:0000305" key="2"/>
<dbReference type="EMBL" id="BC111246">
    <property type="protein sequence ID" value="AAI11247.1"/>
    <property type="molecule type" value="mRNA"/>
</dbReference>
<dbReference type="SMR" id="Q2T9V7"/>
<dbReference type="FunCoup" id="Q2T9V7">
    <property type="interactions" value="638"/>
</dbReference>
<dbReference type="STRING" id="9913.ENSBTAP00000027369"/>
<dbReference type="PaxDb" id="9913-ENSBTAP00000027369"/>
<dbReference type="eggNOG" id="ENOG502S7H4">
    <property type="taxonomic scope" value="Eukaryota"/>
</dbReference>
<dbReference type="InParanoid" id="Q2T9V7"/>
<dbReference type="Proteomes" id="UP000009136">
    <property type="component" value="Unplaced"/>
</dbReference>
<dbReference type="GO" id="GO:0005739">
    <property type="term" value="C:mitochondrion"/>
    <property type="evidence" value="ECO:0007669"/>
    <property type="project" value="UniProtKB-SubCell"/>
</dbReference>
<dbReference type="FunFam" id="2.20.25.10:FF:000017">
    <property type="entry name" value="protein preY, mitochondrial"/>
    <property type="match status" value="1"/>
</dbReference>
<dbReference type="Gene3D" id="2.20.25.10">
    <property type="match status" value="1"/>
</dbReference>
<dbReference type="HAMAP" id="MF_01187">
    <property type="entry name" value="UPF0434"/>
    <property type="match status" value="1"/>
</dbReference>
<dbReference type="InterPro" id="IPR005651">
    <property type="entry name" value="Trm112-like"/>
</dbReference>
<dbReference type="PANTHER" id="PTHR33505:SF4">
    <property type="entry name" value="PROTEIN PREY, MITOCHONDRIAL"/>
    <property type="match status" value="1"/>
</dbReference>
<dbReference type="PANTHER" id="PTHR33505">
    <property type="entry name" value="ZGC:162634"/>
    <property type="match status" value="1"/>
</dbReference>
<dbReference type="Pfam" id="PF03966">
    <property type="entry name" value="Trm112p"/>
    <property type="match status" value="1"/>
</dbReference>
<dbReference type="SUPFAM" id="SSF158997">
    <property type="entry name" value="Trm112p-like"/>
    <property type="match status" value="1"/>
</dbReference>
<gene>
    <name type="primary">PREY</name>
</gene>
<feature type="transit peptide" description="Mitochondrion" evidence="1">
    <location>
        <begin position="1"/>
        <end position="35"/>
    </location>
</feature>
<feature type="chain" id="PRO_0000246314" description="Protein preY, mitochondrial">
    <location>
        <begin position="36"/>
        <end position="114"/>
    </location>
</feature>
<feature type="domain" description="TRM112">
    <location>
        <begin position="51"/>
        <end position="97"/>
    </location>
</feature>
<protein>
    <recommendedName>
        <fullName>Protein preY, mitochondrial</fullName>
    </recommendedName>
</protein>
<comment type="subcellular location">
    <subcellularLocation>
        <location evidence="2">Mitochondrion</location>
    </subcellularLocation>
</comment>
<comment type="miscellaneous">
    <text>PIGY is derived from the same bicistronic transcript that encodes these 2 different proteins.</text>
</comment>
<comment type="similarity">
    <text evidence="2">Belongs to the PREY family.</text>
</comment>
<accession>Q2T9V7</accession>
<name>PREY_BOVIN</name>
<keyword id="KW-0496">Mitochondrion</keyword>
<keyword id="KW-1185">Reference proteome</keyword>
<keyword id="KW-0809">Transit peptide</keyword>
<proteinExistence type="inferred from homology"/>
<organism>
    <name type="scientific">Bos taurus</name>
    <name type="common">Bovine</name>
    <dbReference type="NCBI Taxonomy" id="9913"/>
    <lineage>
        <taxon>Eukaryota</taxon>
        <taxon>Metazoa</taxon>
        <taxon>Chordata</taxon>
        <taxon>Craniata</taxon>
        <taxon>Vertebrata</taxon>
        <taxon>Euteleostomi</taxon>
        <taxon>Mammalia</taxon>
        <taxon>Eutheria</taxon>
        <taxon>Laurasiatheria</taxon>
        <taxon>Artiodactyla</taxon>
        <taxon>Ruminantia</taxon>
        <taxon>Pecora</taxon>
        <taxon>Bovidae</taxon>
        <taxon>Bovinae</taxon>
        <taxon>Bos</taxon>
    </lineage>
</organism>
<reference key="1">
    <citation type="submission" date="2005-08" db="EMBL/GenBank/DDBJ databases">
        <authorList>
            <consortium name="NIH - Mammalian Gene Collection (MGC) project"/>
        </authorList>
    </citation>
    <scope>NUCLEOTIDE SEQUENCE [LARGE SCALE MRNA]</scope>
    <source>
        <strain>Crossbred X Angus</strain>
        <tissue>Liver</tissue>
    </source>
</reference>
<sequence>MLSGVCARLASALRGTRAPPSAVALRCLHASSSRPSADKRDRTEKPPRAFDQALLEFLVCPLSKKPLRYEASTNELINEELGIAYPIIDGIPNMIPQAARMTHQNKKQEEVEQH</sequence>